<keyword id="KW-0963">Cytoplasm</keyword>
<keyword id="KW-1015">Disulfide bond</keyword>
<keyword id="KW-1185">Reference proteome</keyword>
<keyword id="KW-0926">Vacuole</keyword>
<sequence length="171" mass="18751">MSCISRSRALFQIRSLASSSHLPLPKLRPSPAIYKSANKTAFNASPSTSQSATTTRGFRSTAAKMTVHNLTNAQDFKDALKSHKFVLVDFFATWCGPCRAIAPKIAEWSDAFPNIHYVKVDVDEVPDVAQEYNVRAMPTFLLFKDGEKVDEVVGANPPKLQALISANHPSS</sequence>
<comment type="function">
    <text evidence="2">Thioredoxin involved in responses to oxidative and cell wall stresses (PubMed:27059015). Plays an important role in appressorium formation on hyphal tips (PubMed:27059015). TRX2 may affect invasive growth via the MST11-MST7-PMK1 pathway since it is required for the proper folding or dimerization of MAPKK MST7 (PubMed:27059015).</text>
</comment>
<comment type="subcellular location">
    <subcellularLocation>
        <location evidence="2">Cytoplasm</location>
    </subcellularLocation>
    <subcellularLocation>
        <location evidence="2">Vacuole</location>
    </subcellularLocation>
    <text evidence="2">Localizes in the cytoplasm and vacuoles in conidia, appressoria, and invasive hyphae.</text>
</comment>
<comment type="induction">
    <text evidence="2">Expression is induced in the absence of TRX1.</text>
</comment>
<comment type="disruption phenotype">
    <text evidence="2">Leads to reduced growth rate and reduced conidiation and impairs appressorium formation (PubMed:27059015). Leads also to defects in response to light/ dark transitions (PubMed:27059015).</text>
</comment>
<comment type="similarity">
    <text evidence="4">Belongs to the thioredoxin family.</text>
</comment>
<organism>
    <name type="scientific">Pyricularia oryzae (strain 70-15 / ATCC MYA-4617 / FGSC 8958)</name>
    <name type="common">Rice blast fungus</name>
    <name type="synonym">Magnaporthe oryzae</name>
    <dbReference type="NCBI Taxonomy" id="242507"/>
    <lineage>
        <taxon>Eukaryota</taxon>
        <taxon>Fungi</taxon>
        <taxon>Dikarya</taxon>
        <taxon>Ascomycota</taxon>
        <taxon>Pezizomycotina</taxon>
        <taxon>Sordariomycetes</taxon>
        <taxon>Sordariomycetidae</taxon>
        <taxon>Magnaporthales</taxon>
        <taxon>Pyriculariaceae</taxon>
        <taxon>Pyricularia</taxon>
    </lineage>
</organism>
<feature type="chain" id="PRO_0000453106" description="Thioredoxin-2">
    <location>
        <begin position="1"/>
        <end position="171"/>
    </location>
</feature>
<feature type="domain" description="Thioredoxin" evidence="1">
    <location>
        <begin position="41"/>
        <end position="169"/>
    </location>
</feature>
<feature type="disulfide bond" description="Redox-active" evidence="1">
    <location>
        <begin position="95"/>
        <end position="98"/>
    </location>
</feature>
<reference key="1">
    <citation type="journal article" date="2005" name="Nature">
        <title>The genome sequence of the rice blast fungus Magnaporthe grisea.</title>
        <authorList>
            <person name="Dean R.A."/>
            <person name="Talbot N.J."/>
            <person name="Ebbole D.J."/>
            <person name="Farman M.L."/>
            <person name="Mitchell T.K."/>
            <person name="Orbach M.J."/>
            <person name="Thon M.R."/>
            <person name="Kulkarni R."/>
            <person name="Xu J.-R."/>
            <person name="Pan H."/>
            <person name="Read N.D."/>
            <person name="Lee Y.-H."/>
            <person name="Carbone I."/>
            <person name="Brown D."/>
            <person name="Oh Y.Y."/>
            <person name="Donofrio N."/>
            <person name="Jeong J.S."/>
            <person name="Soanes D.M."/>
            <person name="Djonovic S."/>
            <person name="Kolomiets E."/>
            <person name="Rehmeyer C."/>
            <person name="Li W."/>
            <person name="Harding M."/>
            <person name="Kim S."/>
            <person name="Lebrun M.-H."/>
            <person name="Bohnert H."/>
            <person name="Coughlan S."/>
            <person name="Butler J."/>
            <person name="Calvo S.E."/>
            <person name="Ma L.-J."/>
            <person name="Nicol R."/>
            <person name="Purcell S."/>
            <person name="Nusbaum C."/>
            <person name="Galagan J.E."/>
            <person name="Birren B.W."/>
        </authorList>
    </citation>
    <scope>NUCLEOTIDE SEQUENCE [LARGE SCALE GENOMIC DNA]</scope>
    <source>
        <strain>70-15 / ATCC MYA-4617 / FGSC 8958</strain>
    </source>
</reference>
<reference key="2">
    <citation type="journal article" date="2016" name="Environ. Microbiol.">
        <title>Thioredoxins are involved in the activation of the PMK1 MAP kinase pathway during appressorium penetration and invasive growth in Magnaporthe oryzae.</title>
        <authorList>
            <person name="Zhang S."/>
            <person name="Jiang C."/>
            <person name="Zhang Q."/>
            <person name="Qi L."/>
            <person name="Li C."/>
            <person name="Xu J.R."/>
        </authorList>
    </citation>
    <scope>FUNCTION</scope>
    <scope>DISRUPTION PHENOTYPE</scope>
    <scope>SUBCELLULAR LOCATION</scope>
    <scope>INDUCTION</scope>
    <scope>INTERACTION WITH MST7</scope>
</reference>
<evidence type="ECO:0000255" key="1">
    <source>
        <dbReference type="PROSITE-ProRule" id="PRU00691"/>
    </source>
</evidence>
<evidence type="ECO:0000269" key="2">
    <source>
    </source>
</evidence>
<evidence type="ECO:0000303" key="3">
    <source>
    </source>
</evidence>
<evidence type="ECO:0000305" key="4"/>
<protein>
    <recommendedName>
        <fullName evidence="3">Thioredoxin-2</fullName>
    </recommendedName>
</protein>
<accession>G4NFB7</accession>
<gene>
    <name evidence="3" type="primary">TRX2</name>
    <name type="ORF">MGG_04236</name>
</gene>
<proteinExistence type="evidence at protein level"/>
<name>TRX2_PYRO7</name>
<dbReference type="EMBL" id="CM001236">
    <property type="protein sequence ID" value="EHA47211.1"/>
    <property type="molecule type" value="Genomic_DNA"/>
</dbReference>
<dbReference type="RefSeq" id="XP_003719578.1">
    <property type="nucleotide sequence ID" value="XM_003719530.1"/>
</dbReference>
<dbReference type="SMR" id="G4NFB7"/>
<dbReference type="FunCoup" id="G4NFB7">
    <property type="interactions" value="585"/>
</dbReference>
<dbReference type="STRING" id="242507.G4NFB7"/>
<dbReference type="EnsemblFungi" id="MGG_04236T0">
    <property type="protein sequence ID" value="MGG_04236T0"/>
    <property type="gene ID" value="MGG_04236"/>
</dbReference>
<dbReference type="GeneID" id="2677571"/>
<dbReference type="KEGG" id="mgr:MGG_04236"/>
<dbReference type="VEuPathDB" id="FungiDB:MGG_04236"/>
<dbReference type="eggNOG" id="KOG0907">
    <property type="taxonomic scope" value="Eukaryota"/>
</dbReference>
<dbReference type="HOGENOM" id="CLU_090389_14_5_1"/>
<dbReference type="InParanoid" id="G4NFB7"/>
<dbReference type="OMA" id="PAFIAMS"/>
<dbReference type="OrthoDB" id="10263751at2759"/>
<dbReference type="Proteomes" id="UP000009058">
    <property type="component" value="Chromosome 6"/>
</dbReference>
<dbReference type="GO" id="GO:0005773">
    <property type="term" value="C:vacuole"/>
    <property type="evidence" value="ECO:0007669"/>
    <property type="project" value="UniProtKB-SubCell"/>
</dbReference>
<dbReference type="GO" id="GO:0015035">
    <property type="term" value="F:protein-disulfide reductase activity"/>
    <property type="evidence" value="ECO:0007669"/>
    <property type="project" value="InterPro"/>
</dbReference>
<dbReference type="CDD" id="cd02947">
    <property type="entry name" value="TRX_family"/>
    <property type="match status" value="1"/>
</dbReference>
<dbReference type="FunFam" id="3.40.30.10:FF:000245">
    <property type="entry name" value="Thioredoxin"/>
    <property type="match status" value="1"/>
</dbReference>
<dbReference type="Gene3D" id="3.40.30.10">
    <property type="entry name" value="Glutaredoxin"/>
    <property type="match status" value="1"/>
</dbReference>
<dbReference type="InterPro" id="IPR005746">
    <property type="entry name" value="Thioredoxin"/>
</dbReference>
<dbReference type="InterPro" id="IPR036249">
    <property type="entry name" value="Thioredoxin-like_sf"/>
</dbReference>
<dbReference type="InterPro" id="IPR017937">
    <property type="entry name" value="Thioredoxin_CS"/>
</dbReference>
<dbReference type="InterPro" id="IPR013766">
    <property type="entry name" value="Thioredoxin_domain"/>
</dbReference>
<dbReference type="NCBIfam" id="TIGR01068">
    <property type="entry name" value="thioredoxin"/>
    <property type="match status" value="1"/>
</dbReference>
<dbReference type="PANTHER" id="PTHR46115">
    <property type="entry name" value="THIOREDOXIN-LIKE PROTEIN 1"/>
    <property type="match status" value="1"/>
</dbReference>
<dbReference type="Pfam" id="PF00085">
    <property type="entry name" value="Thioredoxin"/>
    <property type="match status" value="1"/>
</dbReference>
<dbReference type="PRINTS" id="PR00421">
    <property type="entry name" value="THIOREDOXIN"/>
</dbReference>
<dbReference type="SUPFAM" id="SSF52833">
    <property type="entry name" value="Thioredoxin-like"/>
    <property type="match status" value="1"/>
</dbReference>
<dbReference type="PROSITE" id="PS00194">
    <property type="entry name" value="THIOREDOXIN_1"/>
    <property type="match status" value="1"/>
</dbReference>
<dbReference type="PROSITE" id="PS51352">
    <property type="entry name" value="THIOREDOXIN_2"/>
    <property type="match status" value="1"/>
</dbReference>